<evidence type="ECO:0000255" key="1">
    <source>
        <dbReference type="HAMAP-Rule" id="MF_00605"/>
    </source>
</evidence>
<dbReference type="EC" id="2.1.1.228" evidence="1"/>
<dbReference type="EMBL" id="CP000681">
    <property type="protein sequence ID" value="ABP74898.1"/>
    <property type="molecule type" value="Genomic_DNA"/>
</dbReference>
<dbReference type="SMR" id="A4Y4L5"/>
<dbReference type="STRING" id="319224.Sputcn32_1170"/>
<dbReference type="KEGG" id="spc:Sputcn32_1170"/>
<dbReference type="eggNOG" id="COG0336">
    <property type="taxonomic scope" value="Bacteria"/>
</dbReference>
<dbReference type="HOGENOM" id="CLU_047363_0_1_6"/>
<dbReference type="GO" id="GO:0005829">
    <property type="term" value="C:cytosol"/>
    <property type="evidence" value="ECO:0007669"/>
    <property type="project" value="TreeGrafter"/>
</dbReference>
<dbReference type="GO" id="GO:0052906">
    <property type="term" value="F:tRNA (guanine(37)-N1)-methyltransferase activity"/>
    <property type="evidence" value="ECO:0007669"/>
    <property type="project" value="UniProtKB-UniRule"/>
</dbReference>
<dbReference type="GO" id="GO:0002939">
    <property type="term" value="P:tRNA N1-guanine methylation"/>
    <property type="evidence" value="ECO:0007669"/>
    <property type="project" value="TreeGrafter"/>
</dbReference>
<dbReference type="CDD" id="cd18080">
    <property type="entry name" value="TrmD-like"/>
    <property type="match status" value="1"/>
</dbReference>
<dbReference type="FunFam" id="1.10.1270.20:FF:000001">
    <property type="entry name" value="tRNA (guanine-N(1)-)-methyltransferase"/>
    <property type="match status" value="1"/>
</dbReference>
<dbReference type="FunFam" id="3.40.1280.10:FF:000001">
    <property type="entry name" value="tRNA (guanine-N(1)-)-methyltransferase"/>
    <property type="match status" value="1"/>
</dbReference>
<dbReference type="Gene3D" id="3.40.1280.10">
    <property type="match status" value="1"/>
</dbReference>
<dbReference type="Gene3D" id="1.10.1270.20">
    <property type="entry name" value="tRNA(m1g37)methyltransferase, domain 2"/>
    <property type="match status" value="1"/>
</dbReference>
<dbReference type="HAMAP" id="MF_00605">
    <property type="entry name" value="TrmD"/>
    <property type="match status" value="1"/>
</dbReference>
<dbReference type="InterPro" id="IPR029028">
    <property type="entry name" value="Alpha/beta_knot_MTases"/>
</dbReference>
<dbReference type="InterPro" id="IPR023148">
    <property type="entry name" value="tRNA_m1G_MeTrfase_C_sf"/>
</dbReference>
<dbReference type="InterPro" id="IPR002649">
    <property type="entry name" value="tRNA_m1G_MeTrfase_TrmD"/>
</dbReference>
<dbReference type="InterPro" id="IPR029026">
    <property type="entry name" value="tRNA_m1G_MTases_N"/>
</dbReference>
<dbReference type="InterPro" id="IPR016009">
    <property type="entry name" value="tRNA_MeTrfase_TRMD/TRM10"/>
</dbReference>
<dbReference type="NCBIfam" id="NF000648">
    <property type="entry name" value="PRK00026.1"/>
    <property type="match status" value="1"/>
</dbReference>
<dbReference type="NCBIfam" id="TIGR00088">
    <property type="entry name" value="trmD"/>
    <property type="match status" value="1"/>
</dbReference>
<dbReference type="PANTHER" id="PTHR46417">
    <property type="entry name" value="TRNA (GUANINE-N(1)-)-METHYLTRANSFERASE"/>
    <property type="match status" value="1"/>
</dbReference>
<dbReference type="PANTHER" id="PTHR46417:SF1">
    <property type="entry name" value="TRNA (GUANINE-N(1)-)-METHYLTRANSFERASE"/>
    <property type="match status" value="1"/>
</dbReference>
<dbReference type="Pfam" id="PF01746">
    <property type="entry name" value="tRNA_m1G_MT"/>
    <property type="match status" value="1"/>
</dbReference>
<dbReference type="PIRSF" id="PIRSF000386">
    <property type="entry name" value="tRNA_mtase"/>
    <property type="match status" value="1"/>
</dbReference>
<dbReference type="SUPFAM" id="SSF75217">
    <property type="entry name" value="alpha/beta knot"/>
    <property type="match status" value="1"/>
</dbReference>
<protein>
    <recommendedName>
        <fullName evidence="1">tRNA (guanine-N(1)-)-methyltransferase</fullName>
        <ecNumber evidence="1">2.1.1.228</ecNumber>
    </recommendedName>
    <alternativeName>
        <fullName evidence="1">M1G-methyltransferase</fullName>
    </alternativeName>
    <alternativeName>
        <fullName evidence="1">tRNA [GM37] methyltransferase</fullName>
    </alternativeName>
</protein>
<keyword id="KW-0963">Cytoplasm</keyword>
<keyword id="KW-0489">Methyltransferase</keyword>
<keyword id="KW-0949">S-adenosyl-L-methionine</keyword>
<keyword id="KW-0808">Transferase</keyword>
<keyword id="KW-0819">tRNA processing</keyword>
<reference key="1">
    <citation type="submission" date="2007-04" db="EMBL/GenBank/DDBJ databases">
        <title>Complete sequence of Shewanella putrefaciens CN-32.</title>
        <authorList>
            <consortium name="US DOE Joint Genome Institute"/>
            <person name="Copeland A."/>
            <person name="Lucas S."/>
            <person name="Lapidus A."/>
            <person name="Barry K."/>
            <person name="Detter J.C."/>
            <person name="Glavina del Rio T."/>
            <person name="Hammon N."/>
            <person name="Israni S."/>
            <person name="Dalin E."/>
            <person name="Tice H."/>
            <person name="Pitluck S."/>
            <person name="Chain P."/>
            <person name="Malfatti S."/>
            <person name="Shin M."/>
            <person name="Vergez L."/>
            <person name="Schmutz J."/>
            <person name="Larimer F."/>
            <person name="Land M."/>
            <person name="Hauser L."/>
            <person name="Kyrpides N."/>
            <person name="Mikhailova N."/>
            <person name="Romine M.F."/>
            <person name="Fredrickson J."/>
            <person name="Tiedje J."/>
            <person name="Richardson P."/>
        </authorList>
    </citation>
    <scope>NUCLEOTIDE SEQUENCE [LARGE SCALE GENOMIC DNA]</scope>
    <source>
        <strain>CN-32 / ATCC BAA-453</strain>
    </source>
</reference>
<proteinExistence type="inferred from homology"/>
<accession>A4Y4L5</accession>
<organism>
    <name type="scientific">Shewanella putrefaciens (strain CN-32 / ATCC BAA-453)</name>
    <dbReference type="NCBI Taxonomy" id="319224"/>
    <lineage>
        <taxon>Bacteria</taxon>
        <taxon>Pseudomonadati</taxon>
        <taxon>Pseudomonadota</taxon>
        <taxon>Gammaproteobacteria</taxon>
        <taxon>Alteromonadales</taxon>
        <taxon>Shewanellaceae</taxon>
        <taxon>Shewanella</taxon>
    </lineage>
</organism>
<gene>
    <name evidence="1" type="primary">trmD</name>
    <name type="ordered locus">Sputcn32_1170</name>
</gene>
<name>TRMD_SHEPC</name>
<comment type="function">
    <text evidence="1">Specifically methylates guanosine-37 in various tRNAs.</text>
</comment>
<comment type="catalytic activity">
    <reaction evidence="1">
        <text>guanosine(37) in tRNA + S-adenosyl-L-methionine = N(1)-methylguanosine(37) in tRNA + S-adenosyl-L-homocysteine + H(+)</text>
        <dbReference type="Rhea" id="RHEA:36899"/>
        <dbReference type="Rhea" id="RHEA-COMP:10145"/>
        <dbReference type="Rhea" id="RHEA-COMP:10147"/>
        <dbReference type="ChEBI" id="CHEBI:15378"/>
        <dbReference type="ChEBI" id="CHEBI:57856"/>
        <dbReference type="ChEBI" id="CHEBI:59789"/>
        <dbReference type="ChEBI" id="CHEBI:73542"/>
        <dbReference type="ChEBI" id="CHEBI:74269"/>
        <dbReference type="EC" id="2.1.1.228"/>
    </reaction>
</comment>
<comment type="subunit">
    <text evidence="1">Homodimer.</text>
</comment>
<comment type="subcellular location">
    <subcellularLocation>
        <location evidence="1">Cytoplasm</location>
    </subcellularLocation>
</comment>
<comment type="similarity">
    <text evidence="1">Belongs to the RNA methyltransferase TrmD family.</text>
</comment>
<feature type="chain" id="PRO_1000006518" description="tRNA (guanine-N(1)-)-methyltransferase">
    <location>
        <begin position="1"/>
        <end position="248"/>
    </location>
</feature>
<feature type="binding site" evidence="1">
    <location>
        <position position="113"/>
    </location>
    <ligand>
        <name>S-adenosyl-L-methionine</name>
        <dbReference type="ChEBI" id="CHEBI:59789"/>
    </ligand>
</feature>
<feature type="binding site" evidence="1">
    <location>
        <begin position="133"/>
        <end position="138"/>
    </location>
    <ligand>
        <name>S-adenosyl-L-methionine</name>
        <dbReference type="ChEBI" id="CHEBI:59789"/>
    </ligand>
</feature>
<sequence length="248" mass="27487">MWLGVITLFPEMFRAVTDFGVTGRAVKNGLLELHTWNPRDFTHDRHNTVDDRPYGGGPGMLMMVQPLRDAIHAAKAAAGEEAKVIYLSPQGRKLDQQGVTELAKSSRLILVCGRYEGIDERIIQTEVDEEWSVGDYVLSGGELPAMTMIDAVSRLVPGVLGKQASAEQDSFSDGLLDCPHYTRPESLDGLDVPAVLLSGNHEQIRLWRLQQSLGRTLLRRPELLQNLALTDEQSTLLAQFVEAMDKHA</sequence>